<dbReference type="EC" id="1.2.4.2"/>
<dbReference type="EMBL" id="AAFI02000109">
    <property type="protein sequence ID" value="EAL63408.1"/>
    <property type="molecule type" value="Genomic_DNA"/>
</dbReference>
<dbReference type="RefSeq" id="XP_636906.1">
    <property type="nucleotide sequence ID" value="XM_631814.1"/>
</dbReference>
<dbReference type="SMR" id="Q54JE4"/>
<dbReference type="FunCoup" id="Q54JE4">
    <property type="interactions" value="432"/>
</dbReference>
<dbReference type="STRING" id="44689.Q54JE4"/>
<dbReference type="PaxDb" id="44689-DDB0234117"/>
<dbReference type="EnsemblProtists" id="EAL63408">
    <property type="protein sequence ID" value="EAL63408"/>
    <property type="gene ID" value="DDB_G0288127"/>
</dbReference>
<dbReference type="GeneID" id="8626461"/>
<dbReference type="KEGG" id="ddi:DDB_G0288127"/>
<dbReference type="dictyBase" id="DDB_G0288127">
    <property type="gene designation" value="ogdh"/>
</dbReference>
<dbReference type="VEuPathDB" id="AmoebaDB:DDB_G0288127"/>
<dbReference type="eggNOG" id="KOG0450">
    <property type="taxonomic scope" value="Eukaryota"/>
</dbReference>
<dbReference type="HOGENOM" id="CLU_004709_1_0_1"/>
<dbReference type="InParanoid" id="Q54JE4"/>
<dbReference type="OMA" id="RDSYCRT"/>
<dbReference type="PhylomeDB" id="Q54JE4"/>
<dbReference type="Reactome" id="R-DDI-6783984">
    <property type="pathway name" value="Glycine degradation"/>
</dbReference>
<dbReference type="Reactome" id="R-DDI-9837999">
    <property type="pathway name" value="Mitochondrial protein degradation"/>
</dbReference>
<dbReference type="Reactome" id="R-DDI-9853506">
    <property type="pathway name" value="OGDH complex synthesizes succinyl-CoA from 2-OG"/>
</dbReference>
<dbReference type="PRO" id="PR:Q54JE4"/>
<dbReference type="Proteomes" id="UP000002195">
    <property type="component" value="Chromosome 5"/>
</dbReference>
<dbReference type="GO" id="GO:0005759">
    <property type="term" value="C:mitochondrial matrix"/>
    <property type="evidence" value="ECO:0007669"/>
    <property type="project" value="UniProtKB-SubCell"/>
</dbReference>
<dbReference type="GO" id="GO:0005739">
    <property type="term" value="C:mitochondrion"/>
    <property type="evidence" value="ECO:0000250"/>
    <property type="project" value="dictyBase"/>
</dbReference>
<dbReference type="GO" id="GO:0045252">
    <property type="term" value="C:oxoglutarate dehydrogenase complex"/>
    <property type="evidence" value="ECO:0000250"/>
    <property type="project" value="dictyBase"/>
</dbReference>
<dbReference type="GO" id="GO:0046872">
    <property type="term" value="F:metal ion binding"/>
    <property type="evidence" value="ECO:0007669"/>
    <property type="project" value="UniProtKB-KW"/>
</dbReference>
<dbReference type="GO" id="GO:0004591">
    <property type="term" value="F:oxoglutarate dehydrogenase (succinyl-transferring) activity"/>
    <property type="evidence" value="ECO:0000318"/>
    <property type="project" value="GO_Central"/>
</dbReference>
<dbReference type="GO" id="GO:0030976">
    <property type="term" value="F:thiamine pyrophosphate binding"/>
    <property type="evidence" value="ECO:0007669"/>
    <property type="project" value="InterPro"/>
</dbReference>
<dbReference type="GO" id="GO:0006096">
    <property type="term" value="P:glycolytic process"/>
    <property type="evidence" value="ECO:0007669"/>
    <property type="project" value="UniProtKB-KW"/>
</dbReference>
<dbReference type="GO" id="GO:0006099">
    <property type="term" value="P:tricarboxylic acid cycle"/>
    <property type="evidence" value="ECO:0000318"/>
    <property type="project" value="GO_Central"/>
</dbReference>
<dbReference type="CDD" id="cd02016">
    <property type="entry name" value="TPP_E1_OGDC_like"/>
    <property type="match status" value="1"/>
</dbReference>
<dbReference type="FunFam" id="3.40.50.12470:FF:000003">
    <property type="entry name" value="2-oxoglutarate dehydrogenase E1 component"/>
    <property type="match status" value="1"/>
</dbReference>
<dbReference type="FunFam" id="3.40.50.970:FF:000002">
    <property type="entry name" value="2-oxoglutarate dehydrogenase, E1 component"/>
    <property type="match status" value="1"/>
</dbReference>
<dbReference type="Gene3D" id="3.40.50.12470">
    <property type="match status" value="1"/>
</dbReference>
<dbReference type="Gene3D" id="3.40.50.970">
    <property type="match status" value="1"/>
</dbReference>
<dbReference type="Gene3D" id="3.40.50.11610">
    <property type="entry name" value="Multifunctional 2-oxoglutarate metabolism enzyme, C-terminal domain"/>
    <property type="match status" value="1"/>
</dbReference>
<dbReference type="Gene3D" id="1.10.287.1150">
    <property type="entry name" value="TPP helical domain"/>
    <property type="match status" value="1"/>
</dbReference>
<dbReference type="InterPro" id="IPR032106">
    <property type="entry name" value="2-oxogl_dehyd_N"/>
</dbReference>
<dbReference type="InterPro" id="IPR011603">
    <property type="entry name" value="2oxoglutarate_DH_E1"/>
</dbReference>
<dbReference type="InterPro" id="IPR001017">
    <property type="entry name" value="DH_E1"/>
</dbReference>
<dbReference type="InterPro" id="IPR042179">
    <property type="entry name" value="KGD_C_sf"/>
</dbReference>
<dbReference type="InterPro" id="IPR031717">
    <property type="entry name" value="ODO-1/KGD_C"/>
</dbReference>
<dbReference type="InterPro" id="IPR029061">
    <property type="entry name" value="THDP-binding"/>
</dbReference>
<dbReference type="InterPro" id="IPR005475">
    <property type="entry name" value="Transketolase-like_Pyr-bd"/>
</dbReference>
<dbReference type="NCBIfam" id="TIGR00239">
    <property type="entry name" value="2oxo_dh_E1"/>
    <property type="match status" value="1"/>
</dbReference>
<dbReference type="NCBIfam" id="NF006914">
    <property type="entry name" value="PRK09404.1"/>
    <property type="match status" value="1"/>
</dbReference>
<dbReference type="NCBIfam" id="NF008907">
    <property type="entry name" value="PRK12270.1"/>
    <property type="match status" value="1"/>
</dbReference>
<dbReference type="PANTHER" id="PTHR23152:SF4">
    <property type="entry name" value="2-OXOADIPATE DEHYDROGENASE COMPLEX COMPONENT E1"/>
    <property type="match status" value="1"/>
</dbReference>
<dbReference type="PANTHER" id="PTHR23152">
    <property type="entry name" value="2-OXOGLUTARATE DEHYDROGENASE"/>
    <property type="match status" value="1"/>
</dbReference>
<dbReference type="Pfam" id="PF16078">
    <property type="entry name" value="2-oxogl_dehyd_N"/>
    <property type="match status" value="1"/>
</dbReference>
<dbReference type="Pfam" id="PF00676">
    <property type="entry name" value="E1_dh"/>
    <property type="match status" value="1"/>
</dbReference>
<dbReference type="Pfam" id="PF16870">
    <property type="entry name" value="OxoGdeHyase_C"/>
    <property type="match status" value="1"/>
</dbReference>
<dbReference type="Pfam" id="PF02779">
    <property type="entry name" value="Transket_pyr"/>
    <property type="match status" value="1"/>
</dbReference>
<dbReference type="PIRSF" id="PIRSF000157">
    <property type="entry name" value="Oxoglu_dh_E1"/>
    <property type="match status" value="1"/>
</dbReference>
<dbReference type="SMART" id="SM00861">
    <property type="entry name" value="Transket_pyr"/>
    <property type="match status" value="1"/>
</dbReference>
<dbReference type="SUPFAM" id="SSF52518">
    <property type="entry name" value="Thiamin diphosphate-binding fold (THDP-binding)"/>
    <property type="match status" value="2"/>
</dbReference>
<comment type="function">
    <text evidence="2">The 2-oxoglutarate dehydrogenase complex catalyzes the overall conversion of 2-oxoglutarate to succinyl-CoA and CO(2). It contains multiple copies of three enzymatic components: 2-oxoglutarate dehydrogenase (E1), dihydrolipoamide succinyltransferase (E2) and lipoamide dehydrogenase (E3) (By similarity).</text>
</comment>
<comment type="catalytic activity">
    <reaction evidence="2">
        <text>N(6)-[(R)-lipoyl]-L-lysyl-[protein] + 2-oxoglutarate + H(+) = N(6)-[(R)-S(8)-succinyldihydrolipoyl]-L-lysyl-[protein] + CO2</text>
        <dbReference type="Rhea" id="RHEA:12188"/>
        <dbReference type="Rhea" id="RHEA-COMP:10474"/>
        <dbReference type="Rhea" id="RHEA-COMP:20092"/>
        <dbReference type="ChEBI" id="CHEBI:15378"/>
        <dbReference type="ChEBI" id="CHEBI:16526"/>
        <dbReference type="ChEBI" id="CHEBI:16810"/>
        <dbReference type="ChEBI" id="CHEBI:83099"/>
        <dbReference type="ChEBI" id="CHEBI:83120"/>
        <dbReference type="EC" id="1.2.4.2"/>
    </reaction>
</comment>
<comment type="cofactor">
    <cofactor evidence="2">
        <name>thiamine diphosphate</name>
        <dbReference type="ChEBI" id="CHEBI:58937"/>
    </cofactor>
    <cofactor evidence="2">
        <name>Mg(2+)</name>
        <dbReference type="ChEBI" id="CHEBI:18420"/>
    </cofactor>
</comment>
<comment type="subunit">
    <text evidence="2">Homodimer (By similarity). Component of the 2-oxoglutarate dehydrogenase complex (By similarity).</text>
</comment>
<comment type="subcellular location">
    <subcellularLocation>
        <location evidence="1">Mitochondrion matrix</location>
    </subcellularLocation>
</comment>
<comment type="similarity">
    <text evidence="4">Belongs to the alpha-ketoglutarate dehydrogenase family.</text>
</comment>
<sequence length="1013" mass="114068">MFTLKQVINKSIQTSMKNGVMSSAVKRSFSTVGGINQPKSRKELSESFLDGTSSTYVEDMFANWVKDPKSVHPSWASFFESSERGVPAGEAFMSPPTLGSSVATKATPSTYTSSGSPKQVSDSMRLLLLVRAYQVRGHALANLDPLGLEVKEEPAEFNPAKYGFTEADMDRPIFVGEGFISGFLTNKQPETTLRQVLKRLKETYCGDIGIEYMHIQDREMCDWIRDKFETSQPVEIPDKEKIKILERLSWADQFEGFLGLKYRATRRFGLDGCESLIPGMKAMIDTATEDGVESIVLGMPHRGRLNVLANVVRKPLPAIFNEFNGGVISIEGEYSATGDVKYHLGTSYDRVTSSGKKVHLSLVANPSHLEAVNPLVEGKVRAKQHYSKDTEQKKSMAVQLHGDASVAGQGVVYETLHLSNLDNYSTGGTVHIVVNNQIGFTTNPKYSRSSKYCTDVAKTIDIPVFHVNGDNVEAVVKVCKIAAEWRQKFKRDVFVDIVCYRKHGHNETDQPKFTQPIMYDKIGKQQPIIEKYSNKLIAEKVITQEQYLQMKNIIHESYEKGYQDGMKHVPNAEDWLESRWEGFKSPIELGNPGRTGIDQDLLQKIGKVLYTEPSGFEVHSTIKRLLKEKKDMFDKGTGFDWATAEALAFGSLLLDGNHVRLSGQDVERGTFSHRHAVWHDQKTDQTYAPLTKLATALGKKDAAEFVASNSSLSEFAVLGFELGYSLENPDALILWEAQFGDFSNGAQVIIDQFISSGEQKWMRQSGLTMLLPHGYDGAGPEHSSCRIERYLQLCDSDPNKIPPKEEAERKQSQHCNMQVLNCSTPVNYFHALRRQVHRDFRKPLVIATPKYLLRYEKSFSTAKEFSNDSFTRLYPEAFPDQINKPEKINRIVFCTGQVYYNLIASRESNNIKDVAIIRVEQLHPFPFDLVAEQLQHYPNAKAIWCQEEPMNMGYWNYIYPYFISTFKHINRPADITYTGRPSSASPAVASHTLHKLQLENFLSNALTGQVGSK</sequence>
<organism>
    <name type="scientific">Dictyostelium discoideum</name>
    <name type="common">Social amoeba</name>
    <dbReference type="NCBI Taxonomy" id="44689"/>
    <lineage>
        <taxon>Eukaryota</taxon>
        <taxon>Amoebozoa</taxon>
        <taxon>Evosea</taxon>
        <taxon>Eumycetozoa</taxon>
        <taxon>Dictyostelia</taxon>
        <taxon>Dictyosteliales</taxon>
        <taxon>Dictyosteliaceae</taxon>
        <taxon>Dictyostelium</taxon>
    </lineage>
</organism>
<gene>
    <name type="primary">ogdh</name>
    <name type="ORF">DDB_G0288127</name>
</gene>
<proteinExistence type="inferred from homology"/>
<evidence type="ECO:0000250" key="1"/>
<evidence type="ECO:0000250" key="2">
    <source>
        <dbReference type="UniProtKB" id="Q02218"/>
    </source>
</evidence>
<evidence type="ECO:0000255" key="3"/>
<evidence type="ECO:0000305" key="4"/>
<reference key="1">
    <citation type="journal article" date="2005" name="Nature">
        <title>The genome of the social amoeba Dictyostelium discoideum.</title>
        <authorList>
            <person name="Eichinger L."/>
            <person name="Pachebat J.A."/>
            <person name="Gloeckner G."/>
            <person name="Rajandream M.A."/>
            <person name="Sucgang R."/>
            <person name="Berriman M."/>
            <person name="Song J."/>
            <person name="Olsen R."/>
            <person name="Szafranski K."/>
            <person name="Xu Q."/>
            <person name="Tunggal B."/>
            <person name="Kummerfeld S."/>
            <person name="Madera M."/>
            <person name="Konfortov B.A."/>
            <person name="Rivero F."/>
            <person name="Bankier A.T."/>
            <person name="Lehmann R."/>
            <person name="Hamlin N."/>
            <person name="Davies R."/>
            <person name="Gaudet P."/>
            <person name="Fey P."/>
            <person name="Pilcher K."/>
            <person name="Chen G."/>
            <person name="Saunders D."/>
            <person name="Sodergren E.J."/>
            <person name="Davis P."/>
            <person name="Kerhornou A."/>
            <person name="Nie X."/>
            <person name="Hall N."/>
            <person name="Anjard C."/>
            <person name="Hemphill L."/>
            <person name="Bason N."/>
            <person name="Farbrother P."/>
            <person name="Desany B."/>
            <person name="Just E."/>
            <person name="Morio T."/>
            <person name="Rost R."/>
            <person name="Churcher C.M."/>
            <person name="Cooper J."/>
            <person name="Haydock S."/>
            <person name="van Driessche N."/>
            <person name="Cronin A."/>
            <person name="Goodhead I."/>
            <person name="Muzny D.M."/>
            <person name="Mourier T."/>
            <person name="Pain A."/>
            <person name="Lu M."/>
            <person name="Harper D."/>
            <person name="Lindsay R."/>
            <person name="Hauser H."/>
            <person name="James K.D."/>
            <person name="Quiles M."/>
            <person name="Madan Babu M."/>
            <person name="Saito T."/>
            <person name="Buchrieser C."/>
            <person name="Wardroper A."/>
            <person name="Felder M."/>
            <person name="Thangavelu M."/>
            <person name="Johnson D."/>
            <person name="Knights A."/>
            <person name="Loulseged H."/>
            <person name="Mungall K.L."/>
            <person name="Oliver K."/>
            <person name="Price C."/>
            <person name="Quail M.A."/>
            <person name="Urushihara H."/>
            <person name="Hernandez J."/>
            <person name="Rabbinowitsch E."/>
            <person name="Steffen D."/>
            <person name="Sanders M."/>
            <person name="Ma J."/>
            <person name="Kohara Y."/>
            <person name="Sharp S."/>
            <person name="Simmonds M.N."/>
            <person name="Spiegler S."/>
            <person name="Tivey A."/>
            <person name="Sugano S."/>
            <person name="White B."/>
            <person name="Walker D."/>
            <person name="Woodward J.R."/>
            <person name="Winckler T."/>
            <person name="Tanaka Y."/>
            <person name="Shaulsky G."/>
            <person name="Schleicher M."/>
            <person name="Weinstock G.M."/>
            <person name="Rosenthal A."/>
            <person name="Cox E.C."/>
            <person name="Chisholm R.L."/>
            <person name="Gibbs R.A."/>
            <person name="Loomis W.F."/>
            <person name="Platzer M."/>
            <person name="Kay R.R."/>
            <person name="Williams J.G."/>
            <person name="Dear P.H."/>
            <person name="Noegel A.A."/>
            <person name="Barrell B.G."/>
            <person name="Kuspa A."/>
        </authorList>
    </citation>
    <scope>NUCLEOTIDE SEQUENCE [LARGE SCALE GENOMIC DNA]</scope>
    <source>
        <strain>AX4</strain>
    </source>
</reference>
<name>ODO1_DICDI</name>
<feature type="transit peptide" description="Mitochondrion" evidence="3">
    <location>
        <begin position="1"/>
        <end position="39"/>
    </location>
</feature>
<feature type="chain" id="PRO_0000328590" description="2-oxoglutarate dehydrogenase, mitochondrial">
    <location>
        <begin position="40"/>
        <end position="1013"/>
    </location>
</feature>
<feature type="binding site" evidence="2">
    <location>
        <position position="302"/>
    </location>
    <ligand>
        <name>thiamine diphosphate</name>
        <dbReference type="ChEBI" id="CHEBI:58937"/>
    </ligand>
</feature>
<feature type="binding site" evidence="2">
    <location>
        <position position="403"/>
    </location>
    <ligand>
        <name>Mg(2+)</name>
        <dbReference type="ChEBI" id="CHEBI:18420"/>
    </ligand>
</feature>
<feature type="binding site" evidence="2">
    <location>
        <position position="403"/>
    </location>
    <ligand>
        <name>thiamine diphosphate</name>
        <dbReference type="ChEBI" id="CHEBI:58937"/>
    </ligand>
</feature>
<feature type="binding site" evidence="2">
    <location>
        <position position="436"/>
    </location>
    <ligand>
        <name>Mg(2+)</name>
        <dbReference type="ChEBI" id="CHEBI:18420"/>
    </ligand>
</feature>
<feature type="binding site" evidence="2">
    <location>
        <position position="436"/>
    </location>
    <ligand>
        <name>thiamine diphosphate</name>
        <dbReference type="ChEBI" id="CHEBI:58937"/>
    </ligand>
</feature>
<feature type="binding site" evidence="2">
    <location>
        <position position="438"/>
    </location>
    <ligand>
        <name>Mg(2+)</name>
        <dbReference type="ChEBI" id="CHEBI:18420"/>
    </ligand>
</feature>
<feature type="binding site" evidence="2">
    <location>
        <position position="438"/>
    </location>
    <ligand>
        <name>thiamine diphosphate</name>
        <dbReference type="ChEBI" id="CHEBI:58937"/>
    </ligand>
</feature>
<feature type="binding site" evidence="2">
    <location>
        <position position="664"/>
    </location>
    <ligand>
        <name>thiamine diphosphate</name>
        <dbReference type="ChEBI" id="CHEBI:58937"/>
    </ligand>
</feature>
<keyword id="KW-0324">Glycolysis</keyword>
<keyword id="KW-0460">Magnesium</keyword>
<keyword id="KW-0479">Metal-binding</keyword>
<keyword id="KW-0496">Mitochondrion</keyword>
<keyword id="KW-0560">Oxidoreductase</keyword>
<keyword id="KW-1185">Reference proteome</keyword>
<keyword id="KW-0786">Thiamine pyrophosphate</keyword>
<keyword id="KW-0809">Transit peptide</keyword>
<protein>
    <recommendedName>
        <fullName>2-oxoglutarate dehydrogenase, mitochondrial</fullName>
        <ecNumber>1.2.4.2</ecNumber>
    </recommendedName>
    <alternativeName>
        <fullName>2-oxoglutarate dehydrogenase complex component E1</fullName>
        <shortName>OGDC-E1</shortName>
    </alternativeName>
    <alternativeName>
        <fullName>Alpha-ketoglutarate dehydrogenase</fullName>
    </alternativeName>
</protein>
<accession>Q54JE4</accession>